<accession>Q211P4</accession>
<organism>
    <name type="scientific">Rhodopseudomonas palustris (strain BisB18)</name>
    <dbReference type="NCBI Taxonomy" id="316056"/>
    <lineage>
        <taxon>Bacteria</taxon>
        <taxon>Pseudomonadati</taxon>
        <taxon>Pseudomonadota</taxon>
        <taxon>Alphaproteobacteria</taxon>
        <taxon>Hyphomicrobiales</taxon>
        <taxon>Nitrobacteraceae</taxon>
        <taxon>Rhodopseudomonas</taxon>
    </lineage>
</organism>
<feature type="chain" id="PRO_0000326787" description="Acylphosphatase">
    <location>
        <begin position="1"/>
        <end position="99"/>
    </location>
</feature>
<feature type="domain" description="Acylphosphatase-like" evidence="1">
    <location>
        <begin position="5"/>
        <end position="97"/>
    </location>
</feature>
<feature type="active site" evidence="1">
    <location>
        <position position="20"/>
    </location>
</feature>
<feature type="active site" evidence="1">
    <location>
        <position position="38"/>
    </location>
</feature>
<evidence type="ECO:0000255" key="1">
    <source>
        <dbReference type="PROSITE-ProRule" id="PRU00520"/>
    </source>
</evidence>
<evidence type="ECO:0000305" key="2"/>
<dbReference type="EC" id="3.6.1.7"/>
<dbReference type="EMBL" id="CP000301">
    <property type="protein sequence ID" value="ABD88892.1"/>
    <property type="molecule type" value="Genomic_DNA"/>
</dbReference>
<dbReference type="SMR" id="Q211P4"/>
<dbReference type="STRING" id="316056.RPC_3350"/>
<dbReference type="KEGG" id="rpc:RPC_3350"/>
<dbReference type="eggNOG" id="COG1254">
    <property type="taxonomic scope" value="Bacteria"/>
</dbReference>
<dbReference type="HOGENOM" id="CLU_141932_3_2_5"/>
<dbReference type="OrthoDB" id="5295388at2"/>
<dbReference type="GO" id="GO:0003998">
    <property type="term" value="F:acylphosphatase activity"/>
    <property type="evidence" value="ECO:0007669"/>
    <property type="project" value="UniProtKB-EC"/>
</dbReference>
<dbReference type="Gene3D" id="3.30.70.100">
    <property type="match status" value="1"/>
</dbReference>
<dbReference type="InterPro" id="IPR020456">
    <property type="entry name" value="Acylphosphatase"/>
</dbReference>
<dbReference type="InterPro" id="IPR001792">
    <property type="entry name" value="Acylphosphatase-like_dom"/>
</dbReference>
<dbReference type="InterPro" id="IPR036046">
    <property type="entry name" value="Acylphosphatase-like_dom_sf"/>
</dbReference>
<dbReference type="InterPro" id="IPR017968">
    <property type="entry name" value="Acylphosphatase_CS"/>
</dbReference>
<dbReference type="NCBIfam" id="NF010996">
    <property type="entry name" value="PRK14421.1"/>
    <property type="match status" value="1"/>
</dbReference>
<dbReference type="PANTHER" id="PTHR47268">
    <property type="entry name" value="ACYLPHOSPHATASE"/>
    <property type="match status" value="1"/>
</dbReference>
<dbReference type="PANTHER" id="PTHR47268:SF4">
    <property type="entry name" value="ACYLPHOSPHATASE"/>
    <property type="match status" value="1"/>
</dbReference>
<dbReference type="Pfam" id="PF00708">
    <property type="entry name" value="Acylphosphatase"/>
    <property type="match status" value="1"/>
</dbReference>
<dbReference type="PRINTS" id="PR00112">
    <property type="entry name" value="ACYLPHPHTASE"/>
</dbReference>
<dbReference type="SUPFAM" id="SSF54975">
    <property type="entry name" value="Acylphosphatase/BLUF domain-like"/>
    <property type="match status" value="1"/>
</dbReference>
<dbReference type="PROSITE" id="PS00151">
    <property type="entry name" value="ACYLPHOSPHATASE_2"/>
    <property type="match status" value="1"/>
</dbReference>
<dbReference type="PROSITE" id="PS51160">
    <property type="entry name" value="ACYLPHOSPHATASE_3"/>
    <property type="match status" value="1"/>
</dbReference>
<sequence>MSTIVRQVTVQGRVQGVGYRAFVEYQAMKLDLEGWVRNRRDGSVEALFAGPAEAVAEIIARCRRGPSSARVTKLDEQPGSVDALDLRRPGERFSTLPTL</sequence>
<name>ACYP_RHOPB</name>
<gene>
    <name type="primary">acyP</name>
    <name type="ordered locus">RPC_3350</name>
</gene>
<comment type="catalytic activity">
    <reaction>
        <text>an acyl phosphate + H2O = a carboxylate + phosphate + H(+)</text>
        <dbReference type="Rhea" id="RHEA:14965"/>
        <dbReference type="ChEBI" id="CHEBI:15377"/>
        <dbReference type="ChEBI" id="CHEBI:15378"/>
        <dbReference type="ChEBI" id="CHEBI:29067"/>
        <dbReference type="ChEBI" id="CHEBI:43474"/>
        <dbReference type="ChEBI" id="CHEBI:59918"/>
        <dbReference type="EC" id="3.6.1.7"/>
    </reaction>
</comment>
<comment type="similarity">
    <text evidence="2">Belongs to the acylphosphatase family.</text>
</comment>
<protein>
    <recommendedName>
        <fullName>Acylphosphatase</fullName>
        <ecNumber>3.6.1.7</ecNumber>
    </recommendedName>
    <alternativeName>
        <fullName>Acylphosphate phosphohydrolase</fullName>
    </alternativeName>
</protein>
<keyword id="KW-0378">Hydrolase</keyword>
<reference key="1">
    <citation type="submission" date="2006-03" db="EMBL/GenBank/DDBJ databases">
        <title>Complete sequence of Rhodopseudomonas palustris BisB18.</title>
        <authorList>
            <consortium name="US DOE Joint Genome Institute"/>
            <person name="Copeland A."/>
            <person name="Lucas S."/>
            <person name="Lapidus A."/>
            <person name="Barry K."/>
            <person name="Detter J.C."/>
            <person name="Glavina del Rio T."/>
            <person name="Hammon N."/>
            <person name="Israni S."/>
            <person name="Dalin E."/>
            <person name="Tice H."/>
            <person name="Pitluck S."/>
            <person name="Chain P."/>
            <person name="Malfatti S."/>
            <person name="Shin M."/>
            <person name="Vergez L."/>
            <person name="Schmutz J."/>
            <person name="Larimer F."/>
            <person name="Land M."/>
            <person name="Hauser L."/>
            <person name="Pelletier D.A."/>
            <person name="Kyrpides N."/>
            <person name="Anderson I."/>
            <person name="Oda Y."/>
            <person name="Harwood C.S."/>
            <person name="Richardson P."/>
        </authorList>
    </citation>
    <scope>NUCLEOTIDE SEQUENCE [LARGE SCALE GENOMIC DNA]</scope>
    <source>
        <strain>BisB18</strain>
    </source>
</reference>
<proteinExistence type="inferred from homology"/>